<proteinExistence type="inferred from homology"/>
<dbReference type="EC" id="2.4.2.7" evidence="1"/>
<dbReference type="EMBL" id="CP000967">
    <property type="protein sequence ID" value="ACD58573.1"/>
    <property type="molecule type" value="Genomic_DNA"/>
</dbReference>
<dbReference type="RefSeq" id="WP_012444712.1">
    <property type="nucleotide sequence ID" value="NC_010717.2"/>
</dbReference>
<dbReference type="SMR" id="B2SHR3"/>
<dbReference type="KEGG" id="xop:PXO_00395"/>
<dbReference type="eggNOG" id="COG0503">
    <property type="taxonomic scope" value="Bacteria"/>
</dbReference>
<dbReference type="HOGENOM" id="CLU_063339_3_0_6"/>
<dbReference type="UniPathway" id="UPA00588">
    <property type="reaction ID" value="UER00646"/>
</dbReference>
<dbReference type="Proteomes" id="UP000001740">
    <property type="component" value="Chromosome"/>
</dbReference>
<dbReference type="GO" id="GO:0005737">
    <property type="term" value="C:cytoplasm"/>
    <property type="evidence" value="ECO:0007669"/>
    <property type="project" value="UniProtKB-SubCell"/>
</dbReference>
<dbReference type="GO" id="GO:0002055">
    <property type="term" value="F:adenine binding"/>
    <property type="evidence" value="ECO:0007669"/>
    <property type="project" value="TreeGrafter"/>
</dbReference>
<dbReference type="GO" id="GO:0003999">
    <property type="term" value="F:adenine phosphoribosyltransferase activity"/>
    <property type="evidence" value="ECO:0007669"/>
    <property type="project" value="UniProtKB-UniRule"/>
</dbReference>
<dbReference type="GO" id="GO:0016208">
    <property type="term" value="F:AMP binding"/>
    <property type="evidence" value="ECO:0007669"/>
    <property type="project" value="TreeGrafter"/>
</dbReference>
<dbReference type="GO" id="GO:0006168">
    <property type="term" value="P:adenine salvage"/>
    <property type="evidence" value="ECO:0007669"/>
    <property type="project" value="InterPro"/>
</dbReference>
<dbReference type="GO" id="GO:0044209">
    <property type="term" value="P:AMP salvage"/>
    <property type="evidence" value="ECO:0007669"/>
    <property type="project" value="UniProtKB-UniRule"/>
</dbReference>
<dbReference type="GO" id="GO:0006166">
    <property type="term" value="P:purine ribonucleoside salvage"/>
    <property type="evidence" value="ECO:0007669"/>
    <property type="project" value="UniProtKB-KW"/>
</dbReference>
<dbReference type="CDD" id="cd06223">
    <property type="entry name" value="PRTases_typeI"/>
    <property type="match status" value="1"/>
</dbReference>
<dbReference type="FunFam" id="3.40.50.2020:FF:000021">
    <property type="entry name" value="Adenine phosphoribosyltransferase"/>
    <property type="match status" value="1"/>
</dbReference>
<dbReference type="Gene3D" id="3.40.50.2020">
    <property type="match status" value="1"/>
</dbReference>
<dbReference type="HAMAP" id="MF_00004">
    <property type="entry name" value="Aden_phosphoribosyltr"/>
    <property type="match status" value="1"/>
</dbReference>
<dbReference type="InterPro" id="IPR005764">
    <property type="entry name" value="Ade_phspho_trans"/>
</dbReference>
<dbReference type="InterPro" id="IPR000836">
    <property type="entry name" value="PRibTrfase_dom"/>
</dbReference>
<dbReference type="InterPro" id="IPR029057">
    <property type="entry name" value="PRTase-like"/>
</dbReference>
<dbReference type="InterPro" id="IPR050054">
    <property type="entry name" value="UPRTase/APRTase"/>
</dbReference>
<dbReference type="NCBIfam" id="TIGR01090">
    <property type="entry name" value="apt"/>
    <property type="match status" value="1"/>
</dbReference>
<dbReference type="NCBIfam" id="NF002634">
    <property type="entry name" value="PRK02304.1-3"/>
    <property type="match status" value="1"/>
</dbReference>
<dbReference type="NCBIfam" id="NF002636">
    <property type="entry name" value="PRK02304.1-5"/>
    <property type="match status" value="1"/>
</dbReference>
<dbReference type="PANTHER" id="PTHR32315">
    <property type="entry name" value="ADENINE PHOSPHORIBOSYLTRANSFERASE"/>
    <property type="match status" value="1"/>
</dbReference>
<dbReference type="PANTHER" id="PTHR32315:SF3">
    <property type="entry name" value="ADENINE PHOSPHORIBOSYLTRANSFERASE"/>
    <property type="match status" value="1"/>
</dbReference>
<dbReference type="Pfam" id="PF00156">
    <property type="entry name" value="Pribosyltran"/>
    <property type="match status" value="1"/>
</dbReference>
<dbReference type="SUPFAM" id="SSF53271">
    <property type="entry name" value="PRTase-like"/>
    <property type="match status" value="1"/>
</dbReference>
<dbReference type="PROSITE" id="PS00103">
    <property type="entry name" value="PUR_PYR_PR_TRANSFER"/>
    <property type="match status" value="1"/>
</dbReference>
<organism>
    <name type="scientific">Xanthomonas oryzae pv. oryzae (strain PXO99A)</name>
    <dbReference type="NCBI Taxonomy" id="360094"/>
    <lineage>
        <taxon>Bacteria</taxon>
        <taxon>Pseudomonadati</taxon>
        <taxon>Pseudomonadota</taxon>
        <taxon>Gammaproteobacteria</taxon>
        <taxon>Lysobacterales</taxon>
        <taxon>Lysobacteraceae</taxon>
        <taxon>Xanthomonas</taxon>
    </lineage>
</organism>
<name>APT_XANOP</name>
<evidence type="ECO:0000255" key="1">
    <source>
        <dbReference type="HAMAP-Rule" id="MF_00004"/>
    </source>
</evidence>
<gene>
    <name evidence="1" type="primary">apt</name>
    <name type="ordered locus">PXO_00395</name>
</gene>
<feature type="chain" id="PRO_1000089017" description="Adenine phosphoribosyltransferase">
    <location>
        <begin position="1"/>
        <end position="186"/>
    </location>
</feature>
<keyword id="KW-0963">Cytoplasm</keyword>
<keyword id="KW-0328">Glycosyltransferase</keyword>
<keyword id="KW-0660">Purine salvage</keyword>
<keyword id="KW-0808">Transferase</keyword>
<protein>
    <recommendedName>
        <fullName evidence="1">Adenine phosphoribosyltransferase</fullName>
        <shortName evidence="1">APRT</shortName>
        <ecNumber evidence="1">2.4.2.7</ecNumber>
    </recommendedName>
</protein>
<reference key="1">
    <citation type="journal article" date="2008" name="BMC Genomics">
        <title>Genome sequence and rapid evolution of the rice pathogen Xanthomonas oryzae pv. oryzae PXO99A.</title>
        <authorList>
            <person name="Salzberg S.L."/>
            <person name="Sommer D.D."/>
            <person name="Schatz M.C."/>
            <person name="Phillippy A.M."/>
            <person name="Rabinowicz P.D."/>
            <person name="Tsuge S."/>
            <person name="Furutani A."/>
            <person name="Ochiai H."/>
            <person name="Delcher A.L."/>
            <person name="Kelley D."/>
            <person name="Madupu R."/>
            <person name="Puiu D."/>
            <person name="Radune D."/>
            <person name="Shumway M."/>
            <person name="Trapnell C."/>
            <person name="Aparna G."/>
            <person name="Jha G."/>
            <person name="Pandey A."/>
            <person name="Patil P.B."/>
            <person name="Ishihara H."/>
            <person name="Meyer D.F."/>
            <person name="Szurek B."/>
            <person name="Verdier V."/>
            <person name="Koebnik R."/>
            <person name="Dow J.M."/>
            <person name="Ryan R.P."/>
            <person name="Hirata H."/>
            <person name="Tsuyumu S."/>
            <person name="Won Lee S."/>
            <person name="Seo Y.-S."/>
            <person name="Sriariyanum M."/>
            <person name="Ronald P.C."/>
            <person name="Sonti R.V."/>
            <person name="Van Sluys M.-A."/>
            <person name="Leach J.E."/>
            <person name="White F.F."/>
            <person name="Bogdanove A.J."/>
        </authorList>
    </citation>
    <scope>NUCLEOTIDE SEQUENCE [LARGE SCALE GENOMIC DNA]</scope>
    <source>
        <strain>PXO99A</strain>
    </source>
</reference>
<comment type="function">
    <text evidence="1">Catalyzes a salvage reaction resulting in the formation of AMP, that is energically less costly than de novo synthesis.</text>
</comment>
<comment type="catalytic activity">
    <reaction evidence="1">
        <text>AMP + diphosphate = 5-phospho-alpha-D-ribose 1-diphosphate + adenine</text>
        <dbReference type="Rhea" id="RHEA:16609"/>
        <dbReference type="ChEBI" id="CHEBI:16708"/>
        <dbReference type="ChEBI" id="CHEBI:33019"/>
        <dbReference type="ChEBI" id="CHEBI:58017"/>
        <dbReference type="ChEBI" id="CHEBI:456215"/>
        <dbReference type="EC" id="2.4.2.7"/>
    </reaction>
</comment>
<comment type="pathway">
    <text evidence="1">Purine metabolism; AMP biosynthesis via salvage pathway; AMP from adenine: step 1/1.</text>
</comment>
<comment type="subunit">
    <text evidence="1">Homodimer.</text>
</comment>
<comment type="subcellular location">
    <subcellularLocation>
        <location evidence="1">Cytoplasm</location>
    </subcellularLocation>
</comment>
<comment type="similarity">
    <text evidence="1">Belongs to the purine/pyrimidine phosphoribosyltransferase family.</text>
</comment>
<accession>B2SHR3</accession>
<sequence>MTDCSRCAGTNASGPNYWSERIRDIVDFPKPGIVFKDITPLLSDGPDFASALDEMAQPWRTTPLDAVLGIEALGFILGAALARELRTGFVPVRKPGKLPGRTLIREYALEYGTDRIEMHEGALPRGARVLIVDDVLATGGTLRAALGLAAQLELEIVGAAVLVELLALQGRQKWADDVPLLATLSF</sequence>